<name>DDL_STRP8</name>
<keyword id="KW-0067">ATP-binding</keyword>
<keyword id="KW-0133">Cell shape</keyword>
<keyword id="KW-0961">Cell wall biogenesis/degradation</keyword>
<keyword id="KW-0963">Cytoplasm</keyword>
<keyword id="KW-0436">Ligase</keyword>
<keyword id="KW-0460">Magnesium</keyword>
<keyword id="KW-0464">Manganese</keyword>
<keyword id="KW-0479">Metal-binding</keyword>
<keyword id="KW-0547">Nucleotide-binding</keyword>
<keyword id="KW-0573">Peptidoglycan synthesis</keyword>
<dbReference type="EC" id="6.3.2.4" evidence="2"/>
<dbReference type="EMBL" id="AE009949">
    <property type="protein sequence ID" value="AAL98015.1"/>
    <property type="molecule type" value="Genomic_DNA"/>
</dbReference>
<dbReference type="RefSeq" id="WP_011017958.1">
    <property type="nucleotide sequence ID" value="NC_003485.1"/>
</dbReference>
<dbReference type="SMR" id="Q8P0C4"/>
<dbReference type="KEGG" id="spm:spyM18_1431"/>
<dbReference type="HOGENOM" id="CLU_039268_0_0_9"/>
<dbReference type="UniPathway" id="UPA00219"/>
<dbReference type="GO" id="GO:0005829">
    <property type="term" value="C:cytosol"/>
    <property type="evidence" value="ECO:0007669"/>
    <property type="project" value="TreeGrafter"/>
</dbReference>
<dbReference type="GO" id="GO:0005524">
    <property type="term" value="F:ATP binding"/>
    <property type="evidence" value="ECO:0007669"/>
    <property type="project" value="UniProtKB-KW"/>
</dbReference>
<dbReference type="GO" id="GO:0008716">
    <property type="term" value="F:D-alanine-D-alanine ligase activity"/>
    <property type="evidence" value="ECO:0007669"/>
    <property type="project" value="UniProtKB-UniRule"/>
</dbReference>
<dbReference type="GO" id="GO:0046872">
    <property type="term" value="F:metal ion binding"/>
    <property type="evidence" value="ECO:0007669"/>
    <property type="project" value="UniProtKB-KW"/>
</dbReference>
<dbReference type="GO" id="GO:0071555">
    <property type="term" value="P:cell wall organization"/>
    <property type="evidence" value="ECO:0007669"/>
    <property type="project" value="UniProtKB-KW"/>
</dbReference>
<dbReference type="GO" id="GO:0009252">
    <property type="term" value="P:peptidoglycan biosynthetic process"/>
    <property type="evidence" value="ECO:0007669"/>
    <property type="project" value="UniProtKB-UniRule"/>
</dbReference>
<dbReference type="GO" id="GO:0008360">
    <property type="term" value="P:regulation of cell shape"/>
    <property type="evidence" value="ECO:0007669"/>
    <property type="project" value="UniProtKB-KW"/>
</dbReference>
<dbReference type="FunFam" id="3.30.1490.20:FF:000007">
    <property type="entry name" value="D-alanine--D-alanine ligase"/>
    <property type="match status" value="1"/>
</dbReference>
<dbReference type="FunFam" id="3.30.470.20:FF:000008">
    <property type="entry name" value="D-alanine--D-alanine ligase"/>
    <property type="match status" value="1"/>
</dbReference>
<dbReference type="Gene3D" id="3.40.50.20">
    <property type="match status" value="1"/>
</dbReference>
<dbReference type="Gene3D" id="3.30.1490.20">
    <property type="entry name" value="ATP-grasp fold, A domain"/>
    <property type="match status" value="1"/>
</dbReference>
<dbReference type="Gene3D" id="3.30.470.20">
    <property type="entry name" value="ATP-grasp fold, B domain"/>
    <property type="match status" value="1"/>
</dbReference>
<dbReference type="HAMAP" id="MF_00047">
    <property type="entry name" value="Dala_Dala_lig"/>
    <property type="match status" value="1"/>
</dbReference>
<dbReference type="InterPro" id="IPR011761">
    <property type="entry name" value="ATP-grasp"/>
</dbReference>
<dbReference type="InterPro" id="IPR013815">
    <property type="entry name" value="ATP_grasp_subdomain_1"/>
</dbReference>
<dbReference type="InterPro" id="IPR000291">
    <property type="entry name" value="D-Ala_lig_Van_CS"/>
</dbReference>
<dbReference type="InterPro" id="IPR005905">
    <property type="entry name" value="D_ala_D_ala"/>
</dbReference>
<dbReference type="InterPro" id="IPR011095">
    <property type="entry name" value="Dala_Dala_lig_C"/>
</dbReference>
<dbReference type="InterPro" id="IPR011127">
    <property type="entry name" value="Dala_Dala_lig_N"/>
</dbReference>
<dbReference type="InterPro" id="IPR016185">
    <property type="entry name" value="PreATP-grasp_dom_sf"/>
</dbReference>
<dbReference type="NCBIfam" id="TIGR01205">
    <property type="entry name" value="D_ala_D_alaTIGR"/>
    <property type="match status" value="1"/>
</dbReference>
<dbReference type="NCBIfam" id="NF002528">
    <property type="entry name" value="PRK01966.1-4"/>
    <property type="match status" value="1"/>
</dbReference>
<dbReference type="NCBIfam" id="NF002529">
    <property type="entry name" value="PRK01966.1-5"/>
    <property type="match status" value="1"/>
</dbReference>
<dbReference type="PANTHER" id="PTHR23132">
    <property type="entry name" value="D-ALANINE--D-ALANINE LIGASE"/>
    <property type="match status" value="1"/>
</dbReference>
<dbReference type="PANTHER" id="PTHR23132:SF25">
    <property type="entry name" value="D-ALANINE--D-ALANINE LIGASE A"/>
    <property type="match status" value="1"/>
</dbReference>
<dbReference type="Pfam" id="PF07478">
    <property type="entry name" value="Dala_Dala_lig_C"/>
    <property type="match status" value="1"/>
</dbReference>
<dbReference type="Pfam" id="PF01820">
    <property type="entry name" value="Dala_Dala_lig_N"/>
    <property type="match status" value="1"/>
</dbReference>
<dbReference type="PIRSF" id="PIRSF039102">
    <property type="entry name" value="Ddl/VanB"/>
    <property type="match status" value="1"/>
</dbReference>
<dbReference type="SUPFAM" id="SSF56059">
    <property type="entry name" value="Glutathione synthetase ATP-binding domain-like"/>
    <property type="match status" value="1"/>
</dbReference>
<dbReference type="SUPFAM" id="SSF52440">
    <property type="entry name" value="PreATP-grasp domain"/>
    <property type="match status" value="1"/>
</dbReference>
<dbReference type="PROSITE" id="PS50975">
    <property type="entry name" value="ATP_GRASP"/>
    <property type="match status" value="1"/>
</dbReference>
<dbReference type="PROSITE" id="PS00843">
    <property type="entry name" value="DALA_DALA_LIGASE_1"/>
    <property type="match status" value="1"/>
</dbReference>
<dbReference type="PROSITE" id="PS00844">
    <property type="entry name" value="DALA_DALA_LIGASE_2"/>
    <property type="match status" value="1"/>
</dbReference>
<reference key="1">
    <citation type="journal article" date="2002" name="Proc. Natl. Acad. Sci. U.S.A.">
        <title>Genome sequence and comparative microarray analysis of serotype M18 group A Streptococcus strains associated with acute rheumatic fever outbreaks.</title>
        <authorList>
            <person name="Smoot J.C."/>
            <person name="Barbian K.D."/>
            <person name="Van Gompel J.J."/>
            <person name="Smoot L.M."/>
            <person name="Chaussee M.S."/>
            <person name="Sylva G.L."/>
            <person name="Sturdevant D.E."/>
            <person name="Ricklefs S.M."/>
            <person name="Porcella S.F."/>
            <person name="Parkins L.D."/>
            <person name="Beres S.B."/>
            <person name="Campbell D.S."/>
            <person name="Smith T.M."/>
            <person name="Zhang Q."/>
            <person name="Kapur V."/>
            <person name="Daly J.A."/>
            <person name="Veasy L.G."/>
            <person name="Musser J.M."/>
        </authorList>
    </citation>
    <scope>NUCLEOTIDE SEQUENCE [LARGE SCALE GENOMIC DNA]</scope>
    <source>
        <strain>MGAS8232</strain>
    </source>
</reference>
<comment type="function">
    <text evidence="2">Cell wall formation.</text>
</comment>
<comment type="catalytic activity">
    <reaction evidence="2">
        <text>2 D-alanine + ATP = D-alanyl-D-alanine + ADP + phosphate + H(+)</text>
        <dbReference type="Rhea" id="RHEA:11224"/>
        <dbReference type="ChEBI" id="CHEBI:15378"/>
        <dbReference type="ChEBI" id="CHEBI:30616"/>
        <dbReference type="ChEBI" id="CHEBI:43474"/>
        <dbReference type="ChEBI" id="CHEBI:57416"/>
        <dbReference type="ChEBI" id="CHEBI:57822"/>
        <dbReference type="ChEBI" id="CHEBI:456216"/>
        <dbReference type="EC" id="6.3.2.4"/>
    </reaction>
</comment>
<comment type="cofactor">
    <cofactor evidence="1">
        <name>Mg(2+)</name>
        <dbReference type="ChEBI" id="CHEBI:18420"/>
    </cofactor>
    <cofactor evidence="1">
        <name>Mn(2+)</name>
        <dbReference type="ChEBI" id="CHEBI:29035"/>
    </cofactor>
    <text evidence="1">Binds 2 magnesium or manganese ions per subunit.</text>
</comment>
<comment type="pathway">
    <text evidence="2">Cell wall biogenesis; peptidoglycan biosynthesis.</text>
</comment>
<comment type="subcellular location">
    <subcellularLocation>
        <location evidence="2">Cytoplasm</location>
    </subcellularLocation>
</comment>
<comment type="similarity">
    <text evidence="2">Belongs to the D-alanine--D-alanine ligase family.</text>
</comment>
<feature type="chain" id="PRO_0000177892" description="D-alanine--D-alanine ligase">
    <location>
        <begin position="1"/>
        <end position="348"/>
    </location>
</feature>
<feature type="domain" description="ATP-grasp" evidence="2">
    <location>
        <begin position="132"/>
        <end position="334"/>
    </location>
</feature>
<feature type="binding site" evidence="2">
    <location>
        <begin position="162"/>
        <end position="217"/>
    </location>
    <ligand>
        <name>ATP</name>
        <dbReference type="ChEBI" id="CHEBI:30616"/>
    </ligand>
</feature>
<feature type="binding site" evidence="2">
    <location>
        <position position="288"/>
    </location>
    <ligand>
        <name>Mg(2+)</name>
        <dbReference type="ChEBI" id="CHEBI:18420"/>
        <label>1</label>
    </ligand>
</feature>
<feature type="binding site" evidence="2">
    <location>
        <position position="301"/>
    </location>
    <ligand>
        <name>Mg(2+)</name>
        <dbReference type="ChEBI" id="CHEBI:18420"/>
        <label>1</label>
    </ligand>
</feature>
<feature type="binding site" evidence="2">
    <location>
        <position position="301"/>
    </location>
    <ligand>
        <name>Mg(2+)</name>
        <dbReference type="ChEBI" id="CHEBI:18420"/>
        <label>2</label>
    </ligand>
</feature>
<feature type="binding site" evidence="2">
    <location>
        <position position="303"/>
    </location>
    <ligand>
        <name>Mg(2+)</name>
        <dbReference type="ChEBI" id="CHEBI:18420"/>
        <label>2</label>
    </ligand>
</feature>
<proteinExistence type="inferred from homology"/>
<accession>Q8P0C4</accession>
<organism>
    <name type="scientific">Streptococcus pyogenes serotype M18 (strain MGAS8232)</name>
    <dbReference type="NCBI Taxonomy" id="186103"/>
    <lineage>
        <taxon>Bacteria</taxon>
        <taxon>Bacillati</taxon>
        <taxon>Bacillota</taxon>
        <taxon>Bacilli</taxon>
        <taxon>Lactobacillales</taxon>
        <taxon>Streptococcaceae</taxon>
        <taxon>Streptococcus</taxon>
    </lineage>
</organism>
<sequence>MSKQTLVLLYGGRSAEREVSVLSAESVMRAVNYDKFLVKTYFITQMGQFIRTQQFSEKPSESERLMTNETIELTQKIKPSDIYEEGAVVFPVLHGPMGEDGSIQGFLEVLRMPYIGTNVMSSSIAMDKITTKRVLESIGIPQVAYTVYIDGQDLEACLVETLARLTFPIFVKPANMGSSVGISKAQTKVELRKAIQLALTYDSRVLIEQGVVAREIEVGLLGNDKVKSTLPGEVIKDVDFYDYQAKYVDNKITMAIPADVDQSIVTEMRSYAEVAFKALGGCGLSRCDFFLTQDGQVYLNELNTMPGFTQWSMYPLLWENMGLAYPDLIEELVTLAQEMFDQRESHLI</sequence>
<evidence type="ECO:0000250" key="1"/>
<evidence type="ECO:0000255" key="2">
    <source>
        <dbReference type="HAMAP-Rule" id="MF_00047"/>
    </source>
</evidence>
<protein>
    <recommendedName>
        <fullName evidence="2">D-alanine--D-alanine ligase</fullName>
        <ecNumber evidence="2">6.3.2.4</ecNumber>
    </recommendedName>
    <alternativeName>
        <fullName evidence="2">D-Ala-D-Ala ligase</fullName>
    </alternativeName>
    <alternativeName>
        <fullName evidence="2">D-alanylalanine synthetase</fullName>
    </alternativeName>
</protein>
<gene>
    <name evidence="2" type="primary">ddl</name>
    <name type="ordered locus">spyM18_1431</name>
</gene>